<gene>
    <name evidence="1" type="primary">purT</name>
    <name type="ordered locus">SbBS512_E2124</name>
</gene>
<feature type="chain" id="PRO_1000186897" description="Formate-dependent phosphoribosylglycinamide formyltransferase">
    <location>
        <begin position="1"/>
        <end position="392"/>
    </location>
</feature>
<feature type="domain" description="ATP-grasp" evidence="1">
    <location>
        <begin position="119"/>
        <end position="308"/>
    </location>
</feature>
<feature type="binding site" evidence="1">
    <location>
        <begin position="22"/>
        <end position="23"/>
    </location>
    <ligand>
        <name>N(1)-(5-phospho-beta-D-ribosyl)glycinamide</name>
        <dbReference type="ChEBI" id="CHEBI:143788"/>
    </ligand>
</feature>
<feature type="binding site" evidence="1">
    <location>
        <position position="82"/>
    </location>
    <ligand>
        <name>N(1)-(5-phospho-beta-D-ribosyl)glycinamide</name>
        <dbReference type="ChEBI" id="CHEBI:143788"/>
    </ligand>
</feature>
<feature type="binding site" evidence="1">
    <location>
        <position position="114"/>
    </location>
    <ligand>
        <name>ATP</name>
        <dbReference type="ChEBI" id="CHEBI:30616"/>
    </ligand>
</feature>
<feature type="binding site" evidence="1">
    <location>
        <position position="155"/>
    </location>
    <ligand>
        <name>ATP</name>
        <dbReference type="ChEBI" id="CHEBI:30616"/>
    </ligand>
</feature>
<feature type="binding site" evidence="1">
    <location>
        <begin position="160"/>
        <end position="165"/>
    </location>
    <ligand>
        <name>ATP</name>
        <dbReference type="ChEBI" id="CHEBI:30616"/>
    </ligand>
</feature>
<feature type="binding site" evidence="1">
    <location>
        <begin position="195"/>
        <end position="198"/>
    </location>
    <ligand>
        <name>ATP</name>
        <dbReference type="ChEBI" id="CHEBI:30616"/>
    </ligand>
</feature>
<feature type="binding site" evidence="1">
    <location>
        <position position="203"/>
    </location>
    <ligand>
        <name>ATP</name>
        <dbReference type="ChEBI" id="CHEBI:30616"/>
    </ligand>
</feature>
<feature type="binding site" evidence="1">
    <location>
        <position position="267"/>
    </location>
    <ligand>
        <name>Mg(2+)</name>
        <dbReference type="ChEBI" id="CHEBI:18420"/>
    </ligand>
</feature>
<feature type="binding site" evidence="1">
    <location>
        <position position="279"/>
    </location>
    <ligand>
        <name>Mg(2+)</name>
        <dbReference type="ChEBI" id="CHEBI:18420"/>
    </ligand>
</feature>
<feature type="binding site" evidence="1">
    <location>
        <position position="286"/>
    </location>
    <ligand>
        <name>N(1)-(5-phospho-beta-D-ribosyl)glycinamide</name>
        <dbReference type="ChEBI" id="CHEBI:143788"/>
    </ligand>
</feature>
<feature type="binding site" evidence="1">
    <location>
        <position position="355"/>
    </location>
    <ligand>
        <name>N(1)-(5-phospho-beta-D-ribosyl)glycinamide</name>
        <dbReference type="ChEBI" id="CHEBI:143788"/>
    </ligand>
</feature>
<feature type="binding site" evidence="1">
    <location>
        <begin position="362"/>
        <end position="363"/>
    </location>
    <ligand>
        <name>N(1)-(5-phospho-beta-D-ribosyl)glycinamide</name>
        <dbReference type="ChEBI" id="CHEBI:143788"/>
    </ligand>
</feature>
<comment type="function">
    <text evidence="1">Involved in the de novo purine biosynthesis. Catalyzes the transfer of formate to 5-phospho-ribosyl-glycinamide (GAR), producing 5-phospho-ribosyl-N-formylglycinamide (FGAR). Formate is provided by PurU via hydrolysis of 10-formyl-tetrahydrofolate.</text>
</comment>
<comment type="catalytic activity">
    <reaction evidence="1">
        <text>N(1)-(5-phospho-beta-D-ribosyl)glycinamide + formate + ATP = N(2)-formyl-N(1)-(5-phospho-beta-D-ribosyl)glycinamide + ADP + phosphate + H(+)</text>
        <dbReference type="Rhea" id="RHEA:24829"/>
        <dbReference type="ChEBI" id="CHEBI:15378"/>
        <dbReference type="ChEBI" id="CHEBI:15740"/>
        <dbReference type="ChEBI" id="CHEBI:30616"/>
        <dbReference type="ChEBI" id="CHEBI:43474"/>
        <dbReference type="ChEBI" id="CHEBI:143788"/>
        <dbReference type="ChEBI" id="CHEBI:147286"/>
        <dbReference type="ChEBI" id="CHEBI:456216"/>
        <dbReference type="EC" id="6.3.1.21"/>
    </reaction>
    <physiologicalReaction direction="left-to-right" evidence="1">
        <dbReference type="Rhea" id="RHEA:24830"/>
    </physiologicalReaction>
</comment>
<comment type="pathway">
    <text evidence="1">Purine metabolism; IMP biosynthesis via de novo pathway; N(2)-formyl-N(1)-(5-phospho-D-ribosyl)glycinamide from N(1)-(5-phospho-D-ribosyl)glycinamide (formate route): step 1/1.</text>
</comment>
<comment type="subunit">
    <text evidence="1">Homodimer.</text>
</comment>
<comment type="similarity">
    <text evidence="1">Belongs to the PurK/PurT family.</text>
</comment>
<sequence>MTLLGTALRPAATRVMLLGSGELGKEVAIECQRLGVEVIAVDRYADAPAMHVAHRSHVINMLDGDALRRVVELEKPHYIVPEIEAIATDMLIQLEEEGLNVVPCARATKLTMNREGIRRLAAEELQLPTSTYRFADSESLFREAVADIGYPCIVKPVMSSSGKGQTFIRSAEQLAQAWKYAQQGGRAGAGRVIVEGVVKFDFEITLLTVSAVDGVHFCAPVGHRQEDGDYRESWQPQQMSPLALERAQEIARKVVLALGGYGLFGVELFVCSDEVIFSEVSPRPHDTGMVTLISQDLSEFALHVRAFLGLPVGGIRQYGPAASAVILPQLTSQNVTFDNVQNAVGADLQIRLFGKPEIDGSRRLGVALATAESVVDAIERAKHAAGQVKVQG</sequence>
<accession>B2U494</accession>
<evidence type="ECO:0000255" key="1">
    <source>
        <dbReference type="HAMAP-Rule" id="MF_01643"/>
    </source>
</evidence>
<protein>
    <recommendedName>
        <fullName evidence="1">Formate-dependent phosphoribosylglycinamide formyltransferase</fullName>
        <ecNumber evidence="1">6.3.1.21</ecNumber>
    </recommendedName>
    <alternativeName>
        <fullName evidence="1">5'-phosphoribosylglycinamide transformylase 2</fullName>
    </alternativeName>
    <alternativeName>
        <fullName evidence="1">Formate-dependent GAR transformylase</fullName>
    </alternativeName>
    <alternativeName>
        <fullName evidence="1">GAR transformylase 2</fullName>
        <shortName evidence="1">GART 2</shortName>
    </alternativeName>
    <alternativeName>
        <fullName evidence="1">Non-folate glycinamide ribonucleotide transformylase</fullName>
    </alternativeName>
    <alternativeName>
        <fullName evidence="1">Phosphoribosylglycinamide formyltransferase 2</fullName>
    </alternativeName>
</protein>
<proteinExistence type="inferred from homology"/>
<organism>
    <name type="scientific">Shigella boydii serotype 18 (strain CDC 3083-94 / BS512)</name>
    <dbReference type="NCBI Taxonomy" id="344609"/>
    <lineage>
        <taxon>Bacteria</taxon>
        <taxon>Pseudomonadati</taxon>
        <taxon>Pseudomonadota</taxon>
        <taxon>Gammaproteobacteria</taxon>
        <taxon>Enterobacterales</taxon>
        <taxon>Enterobacteriaceae</taxon>
        <taxon>Shigella</taxon>
    </lineage>
</organism>
<keyword id="KW-0067">ATP-binding</keyword>
<keyword id="KW-0436">Ligase</keyword>
<keyword id="KW-0460">Magnesium</keyword>
<keyword id="KW-0479">Metal-binding</keyword>
<keyword id="KW-0547">Nucleotide-binding</keyword>
<keyword id="KW-0658">Purine biosynthesis</keyword>
<keyword id="KW-1185">Reference proteome</keyword>
<dbReference type="EC" id="6.3.1.21" evidence="1"/>
<dbReference type="EMBL" id="CP001063">
    <property type="protein sequence ID" value="ACD06784.1"/>
    <property type="molecule type" value="Genomic_DNA"/>
</dbReference>
<dbReference type="RefSeq" id="WP_000173486.1">
    <property type="nucleotide sequence ID" value="NC_010658.1"/>
</dbReference>
<dbReference type="SMR" id="B2U494"/>
<dbReference type="STRING" id="344609.SbBS512_E2124"/>
<dbReference type="KEGG" id="sbc:SbBS512_E2124"/>
<dbReference type="HOGENOM" id="CLU_011534_1_3_6"/>
<dbReference type="UniPathway" id="UPA00074">
    <property type="reaction ID" value="UER00127"/>
</dbReference>
<dbReference type="Proteomes" id="UP000001030">
    <property type="component" value="Chromosome"/>
</dbReference>
<dbReference type="GO" id="GO:0005829">
    <property type="term" value="C:cytosol"/>
    <property type="evidence" value="ECO:0007669"/>
    <property type="project" value="TreeGrafter"/>
</dbReference>
<dbReference type="GO" id="GO:0005524">
    <property type="term" value="F:ATP binding"/>
    <property type="evidence" value="ECO:0007669"/>
    <property type="project" value="UniProtKB-UniRule"/>
</dbReference>
<dbReference type="GO" id="GO:0000287">
    <property type="term" value="F:magnesium ion binding"/>
    <property type="evidence" value="ECO:0007669"/>
    <property type="project" value="InterPro"/>
</dbReference>
<dbReference type="GO" id="GO:0043815">
    <property type="term" value="F:phosphoribosylglycinamide formyltransferase 2 activity"/>
    <property type="evidence" value="ECO:0007669"/>
    <property type="project" value="UniProtKB-UniRule"/>
</dbReference>
<dbReference type="GO" id="GO:0004644">
    <property type="term" value="F:phosphoribosylglycinamide formyltransferase activity"/>
    <property type="evidence" value="ECO:0007669"/>
    <property type="project" value="InterPro"/>
</dbReference>
<dbReference type="GO" id="GO:0006189">
    <property type="term" value="P:'de novo' IMP biosynthetic process"/>
    <property type="evidence" value="ECO:0007669"/>
    <property type="project" value="UniProtKB-UniRule"/>
</dbReference>
<dbReference type="FunFam" id="3.30.1490.20:FF:000013">
    <property type="entry name" value="Formate-dependent phosphoribosylglycinamide formyltransferase"/>
    <property type="match status" value="1"/>
</dbReference>
<dbReference type="FunFam" id="3.30.470.20:FF:000027">
    <property type="entry name" value="Formate-dependent phosphoribosylglycinamide formyltransferase"/>
    <property type="match status" value="1"/>
</dbReference>
<dbReference type="FunFam" id="3.40.50.20:FF:000007">
    <property type="entry name" value="Formate-dependent phosphoribosylglycinamide formyltransferase"/>
    <property type="match status" value="1"/>
</dbReference>
<dbReference type="Gene3D" id="3.40.50.20">
    <property type="match status" value="1"/>
</dbReference>
<dbReference type="Gene3D" id="3.30.1490.20">
    <property type="entry name" value="ATP-grasp fold, A domain"/>
    <property type="match status" value="1"/>
</dbReference>
<dbReference type="Gene3D" id="3.30.470.20">
    <property type="entry name" value="ATP-grasp fold, B domain"/>
    <property type="match status" value="1"/>
</dbReference>
<dbReference type="HAMAP" id="MF_01643">
    <property type="entry name" value="PurT"/>
    <property type="match status" value="1"/>
</dbReference>
<dbReference type="InterPro" id="IPR011761">
    <property type="entry name" value="ATP-grasp"/>
</dbReference>
<dbReference type="InterPro" id="IPR003135">
    <property type="entry name" value="ATP-grasp_carboxylate-amine"/>
</dbReference>
<dbReference type="InterPro" id="IPR013815">
    <property type="entry name" value="ATP_grasp_subdomain_1"/>
</dbReference>
<dbReference type="InterPro" id="IPR016185">
    <property type="entry name" value="PreATP-grasp_dom_sf"/>
</dbReference>
<dbReference type="InterPro" id="IPR005862">
    <property type="entry name" value="PurT"/>
</dbReference>
<dbReference type="InterPro" id="IPR054350">
    <property type="entry name" value="PurT/PurK_preATP-grasp"/>
</dbReference>
<dbReference type="InterPro" id="IPR048740">
    <property type="entry name" value="PurT_C"/>
</dbReference>
<dbReference type="InterPro" id="IPR011054">
    <property type="entry name" value="Rudment_hybrid_motif"/>
</dbReference>
<dbReference type="NCBIfam" id="NF006766">
    <property type="entry name" value="PRK09288.1"/>
    <property type="match status" value="1"/>
</dbReference>
<dbReference type="NCBIfam" id="TIGR01142">
    <property type="entry name" value="purT"/>
    <property type="match status" value="1"/>
</dbReference>
<dbReference type="PANTHER" id="PTHR43055">
    <property type="entry name" value="FORMATE-DEPENDENT PHOSPHORIBOSYLGLYCINAMIDE FORMYLTRANSFERASE"/>
    <property type="match status" value="1"/>
</dbReference>
<dbReference type="PANTHER" id="PTHR43055:SF1">
    <property type="entry name" value="FORMATE-DEPENDENT PHOSPHORIBOSYLGLYCINAMIDE FORMYLTRANSFERASE"/>
    <property type="match status" value="1"/>
</dbReference>
<dbReference type="Pfam" id="PF02222">
    <property type="entry name" value="ATP-grasp"/>
    <property type="match status" value="1"/>
</dbReference>
<dbReference type="Pfam" id="PF21244">
    <property type="entry name" value="PurT_C"/>
    <property type="match status" value="1"/>
</dbReference>
<dbReference type="Pfam" id="PF22660">
    <property type="entry name" value="RS_preATP-grasp-like"/>
    <property type="match status" value="1"/>
</dbReference>
<dbReference type="SUPFAM" id="SSF56059">
    <property type="entry name" value="Glutathione synthetase ATP-binding domain-like"/>
    <property type="match status" value="1"/>
</dbReference>
<dbReference type="SUPFAM" id="SSF52440">
    <property type="entry name" value="PreATP-grasp domain"/>
    <property type="match status" value="1"/>
</dbReference>
<dbReference type="SUPFAM" id="SSF51246">
    <property type="entry name" value="Rudiment single hybrid motif"/>
    <property type="match status" value="1"/>
</dbReference>
<dbReference type="PROSITE" id="PS50975">
    <property type="entry name" value="ATP_GRASP"/>
    <property type="match status" value="1"/>
</dbReference>
<name>PURT_SHIB3</name>
<reference key="1">
    <citation type="submission" date="2008-05" db="EMBL/GenBank/DDBJ databases">
        <title>Complete sequence of Shigella boydii serotype 18 strain BS512.</title>
        <authorList>
            <person name="Rasko D.A."/>
            <person name="Rosovitz M."/>
            <person name="Maurelli A.T."/>
            <person name="Myers G."/>
            <person name="Seshadri R."/>
            <person name="Cer R."/>
            <person name="Jiang L."/>
            <person name="Ravel J."/>
            <person name="Sebastian Y."/>
        </authorList>
    </citation>
    <scope>NUCLEOTIDE SEQUENCE [LARGE SCALE GENOMIC DNA]</scope>
    <source>
        <strain>CDC 3083-94 / BS512</strain>
    </source>
</reference>